<reference key="1">
    <citation type="journal article" date="2018" name="Nat. Commun.">
        <title>Strobilurin biosynthesis in Basidiomycete fungi.</title>
        <authorList>
            <person name="Nofiani R."/>
            <person name="de Mattos-Shipley K."/>
            <person name="Lebe K.E."/>
            <person name="Han L.C."/>
            <person name="Iqbal Z."/>
            <person name="Bailey A.M."/>
            <person name="Willis C.L."/>
            <person name="Simpson T.J."/>
            <person name="Cox R.J."/>
        </authorList>
    </citation>
    <scope>NUCLEOTIDE SEQUENCE [GENOMIC DNA]</scope>
    <scope>INDUCTION</scope>
    <scope>FUNCTION</scope>
    <scope>CATALYTIC ACTIVITY</scope>
    <scope>PATHWAY</scope>
    <scope>BIOTECHNOLOGY</scope>
    <source>
        <strain>CBS 621.79</strain>
    </source>
</reference>
<reference key="2">
    <citation type="journal article" date="1977" name="J. Antibiot.">
        <title>The strobilurins--new antifungal antibiotics from the basidiomycete Strobilurus tenacellus.</title>
        <authorList>
            <person name="Anke T."/>
            <person name="Oberwinkler F."/>
            <person name="Steglich W."/>
            <person name="Schramm G."/>
        </authorList>
    </citation>
    <scope>BIOTECHNOLOGY</scope>
</reference>
<reference key="3">
    <citation type="journal article" date="1981" name="FEBS Lett.">
        <title>Oudemansin, strobilurin A, strobilurin B and myxothiazol: new inhibitors of the bc1 segment of the respiratory chain with an E-beta-methoxyacrylate system as common structural element.</title>
        <authorList>
            <person name="Becker W.F."/>
            <person name="von Jagow G."/>
            <person name="Anke T."/>
            <person name="Steglich W."/>
        </authorList>
    </citation>
    <scope>BIOTECHNOLOGY</scope>
</reference>
<reference key="4">
    <citation type="journal article" date="1999" name="Angew. Chem. Int. Ed.">
        <title>Strobilurins: evolution of a new class of active substances.</title>
        <authorList>
            <person name="Sauter H."/>
            <person name="Steglich W."/>
            <person name="Anke T."/>
        </authorList>
    </citation>
    <scope>REVIEW ON BIOTECHNOLOGY</scope>
</reference>
<reference key="5">
    <citation type="journal article" date="2002" name="Pest Manag. Sci.">
        <title>The strobilurin fungicides.</title>
        <authorList>
            <person name="Bartlett D.W."/>
            <person name="Clough J.M."/>
            <person name="Godwin J.R."/>
            <person name="Hall A.A."/>
            <person name="Hamer M."/>
            <person name="Parr-Dobrzanski B."/>
        </authorList>
    </citation>
    <scope>REVIEW ON BIOTECHNOLOGY</scope>
</reference>
<protein>
    <recommendedName>
        <fullName evidence="8">FAD-dependent monooxygenase str9</fullName>
        <ecNumber evidence="3">1.-.-.-</ecNumber>
    </recommendedName>
    <alternativeName>
        <fullName evidence="8">Strobilurin A biosynthesis cluster protein r9</fullName>
    </alternativeName>
</protein>
<keyword id="KW-0274">FAD</keyword>
<keyword id="KW-0285">Flavoprotein</keyword>
<keyword id="KW-0503">Monooxygenase</keyword>
<keyword id="KW-0560">Oxidoreductase</keyword>
<evidence type="ECO:0000250" key="1">
    <source>
        <dbReference type="UniProtKB" id="B8M9J8"/>
    </source>
</evidence>
<evidence type="ECO:0000250" key="2">
    <source>
        <dbReference type="UniProtKB" id="L0E4H0"/>
    </source>
</evidence>
<evidence type="ECO:0000269" key="3">
    <source>
    </source>
</evidence>
<evidence type="ECO:0000269" key="4">
    <source>
    </source>
</evidence>
<evidence type="ECO:0000269" key="5">
    <source>
    </source>
</evidence>
<evidence type="ECO:0000303" key="6">
    <source>
    </source>
</evidence>
<evidence type="ECO:0000303" key="7">
    <source>
    </source>
</evidence>
<evidence type="ECO:0000303" key="8">
    <source>
    </source>
</evidence>
<evidence type="ECO:0000305" key="9"/>
<evidence type="ECO:0000305" key="10">
    <source>
    </source>
</evidence>
<feature type="chain" id="PRO_0000449337" description="FAD-dependent monooxygenase str9">
    <location>
        <begin position="1"/>
        <end position="463"/>
    </location>
</feature>
<feature type="active site" evidence="2">
    <location>
        <position position="200"/>
    </location>
</feature>
<feature type="binding site" evidence="1">
    <location>
        <position position="37"/>
    </location>
    <ligand>
        <name>FAD</name>
        <dbReference type="ChEBI" id="CHEBI:57692"/>
    </ligand>
</feature>
<feature type="binding site" evidence="1">
    <location>
        <position position="50"/>
    </location>
    <ligand>
        <name>FAD</name>
        <dbReference type="ChEBI" id="CHEBI:57692"/>
    </ligand>
</feature>
<feature type="binding site" evidence="1">
    <location>
        <position position="114"/>
    </location>
    <ligand>
        <name>FAD</name>
        <dbReference type="ChEBI" id="CHEBI:57692"/>
    </ligand>
</feature>
<feature type="binding site" evidence="1">
    <location>
        <position position="334"/>
    </location>
    <ligand>
        <name>FAD</name>
        <dbReference type="ChEBI" id="CHEBI:57692"/>
    </ligand>
</feature>
<proteinExistence type="evidence at protein level"/>
<organism>
    <name type="scientific">Strobilurus tenacellus</name>
    <dbReference type="NCBI Taxonomy" id="41251"/>
    <lineage>
        <taxon>Eukaryota</taxon>
        <taxon>Fungi</taxon>
        <taxon>Dikarya</taxon>
        <taxon>Basidiomycota</taxon>
        <taxon>Agaricomycotina</taxon>
        <taxon>Agaricomycetes</taxon>
        <taxon>Agaricomycetidae</taxon>
        <taxon>Agaricales</taxon>
        <taxon>Marasmiineae</taxon>
        <taxon>Physalacriaceae</taxon>
        <taxon>Strobilurus</taxon>
    </lineage>
</organism>
<sequence length="463" mass="51392">MAVDRKIRIAVVGGGPGGVIAALALSKSPNVEIDLYEAATAFGDIGLSLGMPWRPWRILRLLGLQGYLAALLPPDQIPKEDVTVPTIHYRKSDQAVGEDIFTCTSLSGYTRFRRSHFHAALLPHLPSNCKTYTSKRLVSYAEPSNASDPIVITFADGTTAECDVLVGADGIKSPTRASMYNYAADEAEKAGRSAEANDLRSKIRAKFSGVEVYRSVISAEQLRAAAPDHHAFRCPTQFLGKEKVRMPTYPIQSENSQFLNCALYICDYSREGEDYPEPWVTDVEAKDLRSSLPDWEPEAQAAVSCMGEVVSRWAICTLSPLPFFQRSRVVLLGDAAVRVTTPFSTFSSDHCQTLACYDELPRCRLRPGDDAYILSEILTHPAVTRDNVQKALEIYSEVRVPMSTHVLESSRRTGMDCALHDEVAAADLKSLGERMQQEMVWAWEWNPEDEKKKALDLVEERLV</sequence>
<gene>
    <name evidence="8" type="primary">str9</name>
</gene>
<comment type="function">
    <text evidence="3 10">FAD-dependent monooxygenase; part of the gene cluster that mediates the biosynthesis of strobilurin A, an antifungal polyketide that contains a key beta-methoxyacrylate toxophore that targets the complex III of the mitochondrial electron transport chain (PubMed:30258052). Strobilurin biosynthesis begins with construction of benzoyl CoA by step-wise elimination of ammonia from phenylalanine by the phenylalanine ammonia-lyase str11, oxygenation by str8 and retro-Claisen reaction to form benzoic acid, which is activated to its CoA thiolester benzoyl CoA by the dedicated CoA ligase str10 (PubMed:30258052). Benzoyl CoA forms the starter unit for the highly reducing polyketide synthase stpks1 that produces the polyketide prestrobilutin A (PubMed:30258052). The FAD-dependent oxygenase str9 then catalyzes the key oxidative rearrangement responsible for the creation of the beta-methoxyacrylate toxophore (PubMed:30258052). Str9 performs epoxidation of the 2,3 olefin of prestrobilutin A, followed by Meinwald rearrangement to furnish the aldehyde intermediate (Probable). Rapid enolization of the aldehyde intermediate would give the beta-methoxyacrylate skeleton and methylations catalyzed by str2 and str3 complete the synthesis and lead to the production of strobilurin A (Probable). The short-chain dehydrogenase stl2 and the dehydrogenase str4 play a role in the shunt pathway leading to the production of bolineol (PubMed:30258052). The cluster encodes no obvious halogenase gene that could be involved in production of strobilurin B, nor any obvious dimethylallyl-transferase that could be involved in the production of strobilurin G (Probable). It is possible that unknown proteins encoded in, or near, the cluster (such as str1 or stl1) may form new classes of halogenases or dimethylally-transferases, or that the responsible genes are located elsewhere on the genome (Probable). Similarly, proteins encoded by str5/str6 hydrolases appear to have no chemical role in the biosynthesis of strobilurin A (Probable). Finally, no obvious self-resistance gene is found within the cluster (Probable).</text>
</comment>
<comment type="pathway">
    <text evidence="3">Mycotoxin biosynthesis.</text>
</comment>
<comment type="induction">
    <text evidence="3">Induced in strobilurin-producing conditions (on CGC medium after 6 days of growth).</text>
</comment>
<comment type="biotechnology">
    <text evidence="4 5 6 7 8">The structure of strobilurin A was used for the development of the major class of beta-methoxyacrylate agricultural fungicides since its beta-methoxyacrylate toxophore targets the Qo site of complex III of the mitochondrial electron transport chain and prevents adenosine triphosphate synthesis (PubMed:563391, PubMed:6271595). Compounds such as azoxystrobin (Syngenta) and Kresoxim methyl (BASF) are among the most widely used fungicides worldwide (PubMed:12146165, PubMed:29711574). This class of antifungals are used as effective treatments against a broad range of destructive fungal plant pathogens and make significant contributions to food security (PubMed:12146165, PubMed:29711574). The strobilurin fungicides are estimated to have been worth 3.4 billion dollars in 2015 and they make up 25% of the fungicide market and 6.7% of the total crop protection market (PubMed:30258052).</text>
</comment>
<comment type="similarity">
    <text evidence="9">Belongs to the paxM FAD-dependent monooxygenase family.</text>
</comment>
<name>STR9_STRTC</name>
<dbReference type="EC" id="1.-.-.-" evidence="3"/>
<dbReference type="EMBL" id="KY070339">
    <property type="protein sequence ID" value="ATV82119.1"/>
    <property type="molecule type" value="Genomic_DNA"/>
</dbReference>
<dbReference type="SMR" id="A0A3B1EFQ2"/>
<dbReference type="GO" id="GO:0071949">
    <property type="term" value="F:FAD binding"/>
    <property type="evidence" value="ECO:0007669"/>
    <property type="project" value="InterPro"/>
</dbReference>
<dbReference type="GO" id="GO:0004497">
    <property type="term" value="F:monooxygenase activity"/>
    <property type="evidence" value="ECO:0007669"/>
    <property type="project" value="UniProtKB-KW"/>
</dbReference>
<dbReference type="GO" id="GO:0044550">
    <property type="term" value="P:secondary metabolite biosynthetic process"/>
    <property type="evidence" value="ECO:0007669"/>
    <property type="project" value="TreeGrafter"/>
</dbReference>
<dbReference type="Gene3D" id="3.50.50.60">
    <property type="entry name" value="FAD/NAD(P)-binding domain"/>
    <property type="match status" value="1"/>
</dbReference>
<dbReference type="InterPro" id="IPR002938">
    <property type="entry name" value="FAD-bd"/>
</dbReference>
<dbReference type="InterPro" id="IPR036188">
    <property type="entry name" value="FAD/NAD-bd_sf"/>
</dbReference>
<dbReference type="InterPro" id="IPR051104">
    <property type="entry name" value="FAD_monoxygenase"/>
</dbReference>
<dbReference type="PANTHER" id="PTHR46720:SF3">
    <property type="entry name" value="FAD-BINDING DOMAIN-CONTAINING PROTEIN-RELATED"/>
    <property type="match status" value="1"/>
</dbReference>
<dbReference type="PANTHER" id="PTHR46720">
    <property type="entry name" value="HYDROXYLASE, PUTATIVE (AFU_ORTHOLOGUE AFUA_3G01460)-RELATED"/>
    <property type="match status" value="1"/>
</dbReference>
<dbReference type="Pfam" id="PF01494">
    <property type="entry name" value="FAD_binding_3"/>
    <property type="match status" value="1"/>
</dbReference>
<dbReference type="PRINTS" id="PR00420">
    <property type="entry name" value="RNGMNOXGNASE"/>
</dbReference>
<dbReference type="SUPFAM" id="SSF54373">
    <property type="entry name" value="FAD-linked reductases, C-terminal domain"/>
    <property type="match status" value="1"/>
</dbReference>
<dbReference type="SUPFAM" id="SSF51905">
    <property type="entry name" value="FAD/NAD(P)-binding domain"/>
    <property type="match status" value="1"/>
</dbReference>
<accession>A0A3B1EFQ2</accession>